<feature type="chain" id="PRO_0000168251" description="2-amino-4-hydroxy-6-hydroxymethyldihydropteridine pyrophosphokinase">
    <location>
        <begin position="1"/>
        <end position="163"/>
    </location>
</feature>
<dbReference type="EC" id="2.7.6.3" evidence="1"/>
<dbReference type="EMBL" id="AE000511">
    <property type="protein sequence ID" value="AAD08079.1"/>
    <property type="molecule type" value="Genomic_DNA"/>
</dbReference>
<dbReference type="PIR" id="D64649">
    <property type="entry name" value="D64649"/>
</dbReference>
<dbReference type="RefSeq" id="NP_207826.1">
    <property type="nucleotide sequence ID" value="NC_000915.1"/>
</dbReference>
<dbReference type="SMR" id="O25680"/>
<dbReference type="FunCoup" id="O25680">
    <property type="interactions" value="298"/>
</dbReference>
<dbReference type="STRING" id="85962.HP_1036"/>
<dbReference type="PaxDb" id="85962-C694_05360"/>
<dbReference type="EnsemblBacteria" id="AAD08079">
    <property type="protein sequence ID" value="AAD08079"/>
    <property type="gene ID" value="HP_1036"/>
</dbReference>
<dbReference type="KEGG" id="heo:C694_05360"/>
<dbReference type="KEGG" id="hpy:HP_1036"/>
<dbReference type="PATRIC" id="fig|85962.47.peg.1115"/>
<dbReference type="eggNOG" id="COG0801">
    <property type="taxonomic scope" value="Bacteria"/>
</dbReference>
<dbReference type="InParanoid" id="O25680"/>
<dbReference type="OrthoDB" id="9808041at2"/>
<dbReference type="PhylomeDB" id="O25680"/>
<dbReference type="UniPathway" id="UPA00077">
    <property type="reaction ID" value="UER00155"/>
</dbReference>
<dbReference type="Proteomes" id="UP000000429">
    <property type="component" value="Chromosome"/>
</dbReference>
<dbReference type="GO" id="GO:0003848">
    <property type="term" value="F:2-amino-4-hydroxy-6-hydroxymethyldihydropteridine diphosphokinase activity"/>
    <property type="evidence" value="ECO:0007669"/>
    <property type="project" value="UniProtKB-EC"/>
</dbReference>
<dbReference type="GO" id="GO:0005524">
    <property type="term" value="F:ATP binding"/>
    <property type="evidence" value="ECO:0007669"/>
    <property type="project" value="UniProtKB-KW"/>
</dbReference>
<dbReference type="GO" id="GO:0016301">
    <property type="term" value="F:kinase activity"/>
    <property type="evidence" value="ECO:0007669"/>
    <property type="project" value="UniProtKB-KW"/>
</dbReference>
<dbReference type="GO" id="GO:0046656">
    <property type="term" value="P:folic acid biosynthetic process"/>
    <property type="evidence" value="ECO:0007669"/>
    <property type="project" value="UniProtKB-KW"/>
</dbReference>
<dbReference type="GO" id="GO:0046654">
    <property type="term" value="P:tetrahydrofolate biosynthetic process"/>
    <property type="evidence" value="ECO:0007669"/>
    <property type="project" value="UniProtKB-UniPathway"/>
</dbReference>
<dbReference type="CDD" id="cd00483">
    <property type="entry name" value="HPPK"/>
    <property type="match status" value="1"/>
</dbReference>
<dbReference type="Gene3D" id="3.30.70.560">
    <property type="entry name" value="7,8-Dihydro-6-hydroxymethylpterin-pyrophosphokinase HPPK"/>
    <property type="match status" value="1"/>
</dbReference>
<dbReference type="InterPro" id="IPR000550">
    <property type="entry name" value="Hppk"/>
</dbReference>
<dbReference type="InterPro" id="IPR035907">
    <property type="entry name" value="Hppk_sf"/>
</dbReference>
<dbReference type="NCBIfam" id="TIGR01498">
    <property type="entry name" value="folK"/>
    <property type="match status" value="1"/>
</dbReference>
<dbReference type="PANTHER" id="PTHR43071">
    <property type="entry name" value="2-AMINO-4-HYDROXY-6-HYDROXYMETHYLDIHYDROPTERIDINE PYROPHOSPHOKINASE"/>
    <property type="match status" value="1"/>
</dbReference>
<dbReference type="PANTHER" id="PTHR43071:SF1">
    <property type="entry name" value="2-AMINO-4-HYDROXY-6-HYDROXYMETHYLDIHYDROPTERIDINE PYROPHOSPHOKINASE"/>
    <property type="match status" value="1"/>
</dbReference>
<dbReference type="Pfam" id="PF01288">
    <property type="entry name" value="HPPK"/>
    <property type="match status" value="1"/>
</dbReference>
<dbReference type="SUPFAM" id="SSF55083">
    <property type="entry name" value="6-hydroxymethyl-7,8-dihydropterin pyrophosphokinase, HPPK"/>
    <property type="match status" value="1"/>
</dbReference>
<dbReference type="PROSITE" id="PS00794">
    <property type="entry name" value="HPPK"/>
    <property type="match status" value="1"/>
</dbReference>
<proteinExistence type="inferred from homology"/>
<name>HPPK_HELPY</name>
<sequence>MMREILTSRFFPSLFKKRLDFSNRVVLGLGSNLKNPLKILKNCFLYFKNHSKIGKIFSSPIYINPPFGYTKQPNFYNATIILKTSLSLRHFFALVFYIERRFGRQRKRDFKDAPRTLDIDIIAFNQVILRQNDLALPHPKWSERDSVLVPLALQQILFKKGEW</sequence>
<comment type="function">
    <text evidence="1">Catalyzes the transfer of pyrophosphate from adenosine triphosphate (ATP) to 6-hydroxymethyl-7,8-dihydropterin, an enzymatic step in folate biosynthesis pathway.</text>
</comment>
<comment type="catalytic activity">
    <reaction evidence="1">
        <text>6-hydroxymethyl-7,8-dihydropterin + ATP = (7,8-dihydropterin-6-yl)methyl diphosphate + AMP + H(+)</text>
        <dbReference type="Rhea" id="RHEA:11412"/>
        <dbReference type="ChEBI" id="CHEBI:15378"/>
        <dbReference type="ChEBI" id="CHEBI:30616"/>
        <dbReference type="ChEBI" id="CHEBI:44841"/>
        <dbReference type="ChEBI" id="CHEBI:72950"/>
        <dbReference type="ChEBI" id="CHEBI:456215"/>
        <dbReference type="EC" id="2.7.6.3"/>
    </reaction>
</comment>
<comment type="pathway">
    <text evidence="1">Cofactor biosynthesis; tetrahydrofolate biosynthesis; 2-amino-4-hydroxy-6-hydroxymethyl-7,8-dihydropteridine diphosphate from 7,8-dihydroneopterin triphosphate: step 4/4.</text>
</comment>
<comment type="similarity">
    <text evidence="2">Belongs to the HPPK family.</text>
</comment>
<reference key="1">
    <citation type="journal article" date="1997" name="Nature">
        <title>The complete genome sequence of the gastric pathogen Helicobacter pylori.</title>
        <authorList>
            <person name="Tomb J.-F."/>
            <person name="White O."/>
            <person name="Kerlavage A.R."/>
            <person name="Clayton R.A."/>
            <person name="Sutton G.G."/>
            <person name="Fleischmann R.D."/>
            <person name="Ketchum K.A."/>
            <person name="Klenk H.-P."/>
            <person name="Gill S.R."/>
            <person name="Dougherty B.A."/>
            <person name="Nelson K.E."/>
            <person name="Quackenbush J."/>
            <person name="Zhou L."/>
            <person name="Kirkness E.F."/>
            <person name="Peterson S.N."/>
            <person name="Loftus B.J."/>
            <person name="Richardson D.L."/>
            <person name="Dodson R.J."/>
            <person name="Khalak H.G."/>
            <person name="Glodek A."/>
            <person name="McKenney K."/>
            <person name="FitzGerald L.M."/>
            <person name="Lee N."/>
            <person name="Adams M.D."/>
            <person name="Hickey E.K."/>
            <person name="Berg D.E."/>
            <person name="Gocayne J.D."/>
            <person name="Utterback T.R."/>
            <person name="Peterson J.D."/>
            <person name="Kelley J.M."/>
            <person name="Cotton M.D."/>
            <person name="Weidman J.F."/>
            <person name="Fujii C."/>
            <person name="Bowman C."/>
            <person name="Watthey L."/>
            <person name="Wallin E."/>
            <person name="Hayes W.S."/>
            <person name="Borodovsky M."/>
            <person name="Karp P.D."/>
            <person name="Smith H.O."/>
            <person name="Fraser C.M."/>
            <person name="Venter J.C."/>
        </authorList>
    </citation>
    <scope>NUCLEOTIDE SEQUENCE [LARGE SCALE GENOMIC DNA]</scope>
    <source>
        <strain>ATCC 700392 / 26695</strain>
    </source>
</reference>
<keyword id="KW-0067">ATP-binding</keyword>
<keyword id="KW-0289">Folate biosynthesis</keyword>
<keyword id="KW-0418">Kinase</keyword>
<keyword id="KW-0547">Nucleotide-binding</keyword>
<keyword id="KW-1185">Reference proteome</keyword>
<keyword id="KW-0808">Transferase</keyword>
<accession>O25680</accession>
<organism>
    <name type="scientific">Helicobacter pylori (strain ATCC 700392 / 26695)</name>
    <name type="common">Campylobacter pylori</name>
    <dbReference type="NCBI Taxonomy" id="85962"/>
    <lineage>
        <taxon>Bacteria</taxon>
        <taxon>Pseudomonadati</taxon>
        <taxon>Campylobacterota</taxon>
        <taxon>Epsilonproteobacteria</taxon>
        <taxon>Campylobacterales</taxon>
        <taxon>Helicobacteraceae</taxon>
        <taxon>Helicobacter</taxon>
    </lineage>
</organism>
<evidence type="ECO:0000250" key="1">
    <source>
        <dbReference type="UniProtKB" id="P26281"/>
    </source>
</evidence>
<evidence type="ECO:0000305" key="2"/>
<gene>
    <name type="primary">folK</name>
    <name type="ordered locus">HP_1036</name>
</gene>
<protein>
    <recommendedName>
        <fullName evidence="1">2-amino-4-hydroxy-6-hydroxymethyldihydropteridine pyrophosphokinase</fullName>
        <ecNumber evidence="1">2.7.6.3</ecNumber>
    </recommendedName>
    <alternativeName>
        <fullName evidence="1">6-hydroxymethyl-7,8-dihydropterin pyrophosphokinase</fullName>
        <shortName evidence="1">PPPK</shortName>
    </alternativeName>
    <alternativeName>
        <fullName evidence="1">7,8-dihydro-6-hydroxymethylpterin-pyrophosphokinase</fullName>
        <shortName evidence="1">HPPK</shortName>
    </alternativeName>
</protein>